<dbReference type="EMBL" id="CU329670">
    <property type="protein sequence ID" value="CAB11726.1"/>
    <property type="molecule type" value="Genomic_DNA"/>
</dbReference>
<dbReference type="PIR" id="T39035">
    <property type="entry name" value="T39035"/>
</dbReference>
<dbReference type="RefSeq" id="NP_593894.1">
    <property type="nucleotide sequence ID" value="NM_001019324.2"/>
</dbReference>
<dbReference type="BioGRID" id="279259">
    <property type="interactions" value="37"/>
</dbReference>
<dbReference type="FunCoup" id="O14234">
    <property type="interactions" value="36"/>
</dbReference>
<dbReference type="STRING" id="284812.O14234"/>
<dbReference type="TCDB" id="1.A.1.11.23">
    <property type="family name" value="the voltage-gated ion channel (vic) superfamily"/>
</dbReference>
<dbReference type="iPTMnet" id="O14234"/>
<dbReference type="PaxDb" id="4896-SPAC6F6.01.1"/>
<dbReference type="EnsemblFungi" id="SPAC6F6.01.1">
    <property type="protein sequence ID" value="SPAC6F6.01.1:pep"/>
    <property type="gene ID" value="SPAC6F6.01"/>
</dbReference>
<dbReference type="GeneID" id="2542812"/>
<dbReference type="KEGG" id="spo:2542812"/>
<dbReference type="PomBase" id="SPAC6F6.01">
    <property type="gene designation" value="cch1"/>
</dbReference>
<dbReference type="VEuPathDB" id="FungiDB:SPAC6F6.01"/>
<dbReference type="eggNOG" id="KOG2301">
    <property type="taxonomic scope" value="Eukaryota"/>
</dbReference>
<dbReference type="HOGENOM" id="CLU_000443_1_0_1"/>
<dbReference type="InParanoid" id="O14234"/>
<dbReference type="OMA" id="TLFIAWN"/>
<dbReference type="PhylomeDB" id="O14234"/>
<dbReference type="Reactome" id="R-SPO-445355">
    <property type="pathway name" value="Smooth Muscle Contraction"/>
</dbReference>
<dbReference type="PRO" id="PR:O14234"/>
<dbReference type="Proteomes" id="UP000002485">
    <property type="component" value="Chromosome I"/>
</dbReference>
<dbReference type="GO" id="GO:0005891">
    <property type="term" value="C:voltage-gated calcium channel complex"/>
    <property type="evidence" value="ECO:0000318"/>
    <property type="project" value="GO_Central"/>
</dbReference>
<dbReference type="GO" id="GO:0015275">
    <property type="term" value="F:stretch-activated, monoatomic cation-selective, calcium channel activity"/>
    <property type="evidence" value="ECO:0000315"/>
    <property type="project" value="PomBase"/>
</dbReference>
<dbReference type="GO" id="GO:0005245">
    <property type="term" value="F:voltage-gated calcium channel activity"/>
    <property type="evidence" value="ECO:0007669"/>
    <property type="project" value="InterPro"/>
</dbReference>
<dbReference type="GO" id="GO:0098703">
    <property type="term" value="P:calcium ion import across plasma membrane"/>
    <property type="evidence" value="ECO:0000315"/>
    <property type="project" value="PomBase"/>
</dbReference>
<dbReference type="FunFam" id="1.10.287.70:FF:000093">
    <property type="entry name" value="Calcium channel subunit Cch1"/>
    <property type="match status" value="1"/>
</dbReference>
<dbReference type="FunFam" id="1.20.120.350:FF:000098">
    <property type="entry name" value="Calcium channel subunit Cch1"/>
    <property type="match status" value="1"/>
</dbReference>
<dbReference type="Gene3D" id="1.10.287.70">
    <property type="match status" value="4"/>
</dbReference>
<dbReference type="Gene3D" id="1.20.120.350">
    <property type="entry name" value="Voltage-gated potassium channels. Chain C"/>
    <property type="match status" value="4"/>
</dbReference>
<dbReference type="InterPro" id="IPR005821">
    <property type="entry name" value="Ion_trans_dom"/>
</dbReference>
<dbReference type="InterPro" id="IPR050599">
    <property type="entry name" value="VDCC_alpha-1_subunit"/>
</dbReference>
<dbReference type="InterPro" id="IPR002077">
    <property type="entry name" value="VDCCAlpha1"/>
</dbReference>
<dbReference type="InterPro" id="IPR027359">
    <property type="entry name" value="Volt_channel_dom_sf"/>
</dbReference>
<dbReference type="PANTHER" id="PTHR45628">
    <property type="entry name" value="VOLTAGE-DEPENDENT CALCIUM CHANNEL TYPE A SUBUNIT ALPHA-1"/>
    <property type="match status" value="1"/>
</dbReference>
<dbReference type="PANTHER" id="PTHR45628:SF7">
    <property type="entry name" value="VOLTAGE-DEPENDENT CALCIUM CHANNEL TYPE A SUBUNIT ALPHA-1"/>
    <property type="match status" value="1"/>
</dbReference>
<dbReference type="Pfam" id="PF00520">
    <property type="entry name" value="Ion_trans"/>
    <property type="match status" value="4"/>
</dbReference>
<dbReference type="PRINTS" id="PR00167">
    <property type="entry name" value="CACHANNEL"/>
</dbReference>
<dbReference type="SUPFAM" id="SSF81324">
    <property type="entry name" value="Voltage-gated potassium channels"/>
    <property type="match status" value="4"/>
</dbReference>
<reference key="1">
    <citation type="journal article" date="2002" name="Nature">
        <title>The genome sequence of Schizosaccharomyces pombe.</title>
        <authorList>
            <person name="Wood V."/>
            <person name="Gwilliam R."/>
            <person name="Rajandream M.A."/>
            <person name="Lyne M.H."/>
            <person name="Lyne R."/>
            <person name="Stewart A."/>
            <person name="Sgouros J.G."/>
            <person name="Peat N."/>
            <person name="Hayles J."/>
            <person name="Baker S.G."/>
            <person name="Basham D."/>
            <person name="Bowman S."/>
            <person name="Brooks K."/>
            <person name="Brown D."/>
            <person name="Brown S."/>
            <person name="Chillingworth T."/>
            <person name="Churcher C.M."/>
            <person name="Collins M."/>
            <person name="Connor R."/>
            <person name="Cronin A."/>
            <person name="Davis P."/>
            <person name="Feltwell T."/>
            <person name="Fraser A."/>
            <person name="Gentles S."/>
            <person name="Goble A."/>
            <person name="Hamlin N."/>
            <person name="Harris D.E."/>
            <person name="Hidalgo J."/>
            <person name="Hodgson G."/>
            <person name="Holroyd S."/>
            <person name="Hornsby T."/>
            <person name="Howarth S."/>
            <person name="Huckle E.J."/>
            <person name="Hunt S."/>
            <person name="Jagels K."/>
            <person name="James K.D."/>
            <person name="Jones L."/>
            <person name="Jones M."/>
            <person name="Leather S."/>
            <person name="McDonald S."/>
            <person name="McLean J."/>
            <person name="Mooney P."/>
            <person name="Moule S."/>
            <person name="Mungall K.L."/>
            <person name="Murphy L.D."/>
            <person name="Niblett D."/>
            <person name="Odell C."/>
            <person name="Oliver K."/>
            <person name="O'Neil S."/>
            <person name="Pearson D."/>
            <person name="Quail M.A."/>
            <person name="Rabbinowitsch E."/>
            <person name="Rutherford K.M."/>
            <person name="Rutter S."/>
            <person name="Saunders D."/>
            <person name="Seeger K."/>
            <person name="Sharp S."/>
            <person name="Skelton J."/>
            <person name="Simmonds M.N."/>
            <person name="Squares R."/>
            <person name="Squares S."/>
            <person name="Stevens K."/>
            <person name="Taylor K."/>
            <person name="Taylor R.G."/>
            <person name="Tivey A."/>
            <person name="Walsh S.V."/>
            <person name="Warren T."/>
            <person name="Whitehead S."/>
            <person name="Woodward J.R."/>
            <person name="Volckaert G."/>
            <person name="Aert R."/>
            <person name="Robben J."/>
            <person name="Grymonprez B."/>
            <person name="Weltjens I."/>
            <person name="Vanstreels E."/>
            <person name="Rieger M."/>
            <person name="Schaefer M."/>
            <person name="Mueller-Auer S."/>
            <person name="Gabel C."/>
            <person name="Fuchs M."/>
            <person name="Duesterhoeft A."/>
            <person name="Fritzc C."/>
            <person name="Holzer E."/>
            <person name="Moestl D."/>
            <person name="Hilbert H."/>
            <person name="Borzym K."/>
            <person name="Langer I."/>
            <person name="Beck A."/>
            <person name="Lehrach H."/>
            <person name="Reinhardt R."/>
            <person name="Pohl T.M."/>
            <person name="Eger P."/>
            <person name="Zimmermann W."/>
            <person name="Wedler H."/>
            <person name="Wambutt R."/>
            <person name="Purnelle B."/>
            <person name="Goffeau A."/>
            <person name="Cadieu E."/>
            <person name="Dreano S."/>
            <person name="Gloux S."/>
            <person name="Lelaure V."/>
            <person name="Mottier S."/>
            <person name="Galibert F."/>
            <person name="Aves S.J."/>
            <person name="Xiang Z."/>
            <person name="Hunt C."/>
            <person name="Moore K."/>
            <person name="Hurst S.M."/>
            <person name="Lucas M."/>
            <person name="Rochet M."/>
            <person name="Gaillardin C."/>
            <person name="Tallada V.A."/>
            <person name="Garzon A."/>
            <person name="Thode G."/>
            <person name="Daga R.R."/>
            <person name="Cruzado L."/>
            <person name="Jimenez J."/>
            <person name="Sanchez M."/>
            <person name="del Rey F."/>
            <person name="Benito J."/>
            <person name="Dominguez A."/>
            <person name="Revuelta J.L."/>
            <person name="Moreno S."/>
            <person name="Armstrong J."/>
            <person name="Forsburg S.L."/>
            <person name="Cerutti L."/>
            <person name="Lowe T."/>
            <person name="McCombie W.R."/>
            <person name="Paulsen I."/>
            <person name="Potashkin J."/>
            <person name="Shpakovski G.V."/>
            <person name="Ussery D."/>
            <person name="Barrell B.G."/>
            <person name="Nurse P."/>
        </authorList>
    </citation>
    <scope>NUCLEOTIDE SEQUENCE [LARGE SCALE GENOMIC DNA]</scope>
    <source>
        <strain>972 / ATCC 24843</strain>
    </source>
</reference>
<reference key="2">
    <citation type="journal article" date="2006" name="Nat. Biotechnol.">
        <title>ORFeome cloning and global analysis of protein localization in the fission yeast Schizosaccharomyces pombe.</title>
        <authorList>
            <person name="Matsuyama A."/>
            <person name="Arai R."/>
            <person name="Yashiroda Y."/>
            <person name="Shirai A."/>
            <person name="Kamata A."/>
            <person name="Sekido S."/>
            <person name="Kobayashi Y."/>
            <person name="Hashimoto A."/>
            <person name="Hamamoto M."/>
            <person name="Hiraoka Y."/>
            <person name="Horinouchi S."/>
            <person name="Yoshida M."/>
        </authorList>
    </citation>
    <scope>SUBCELLULAR LOCATION [LARGE SCALE ANALYSIS]</scope>
</reference>
<proteinExistence type="inferred from homology"/>
<evidence type="ECO:0000250" key="1">
    <source>
        <dbReference type="UniProtKB" id="P50077"/>
    </source>
</evidence>
<evidence type="ECO:0000255" key="2"/>
<evidence type="ECO:0000255" key="3">
    <source>
        <dbReference type="PROSITE-ProRule" id="PRU00498"/>
    </source>
</evidence>
<evidence type="ECO:0000256" key="4">
    <source>
        <dbReference type="SAM" id="MobiDB-lite"/>
    </source>
</evidence>
<evidence type="ECO:0000305" key="5"/>
<comment type="function">
    <text evidence="1">Voltage-gated, high-affinity calcium channel that functions together with yam8 to mediate calcium entry into cells (By similarity). Required during conditions of environmental stress (By similarity).</text>
</comment>
<comment type="subunit">
    <text evidence="1">Interacts with yam8 to form a Ca(2+) influx channel.</text>
</comment>
<comment type="subcellular location">
    <subcellularLocation>
        <location evidence="1">Cell membrane</location>
        <topology evidence="2">Multi-pass membrane protein</topology>
    </subcellularLocation>
</comment>
<comment type="similarity">
    <text evidence="5">Belongs to the calcium channel alpha-1 subunit (TC 1.A.1.11) family.</text>
</comment>
<name>CCH1_SCHPO</name>
<organism>
    <name type="scientific">Schizosaccharomyces pombe (strain 972 / ATCC 24843)</name>
    <name type="common">Fission yeast</name>
    <dbReference type="NCBI Taxonomy" id="284812"/>
    <lineage>
        <taxon>Eukaryota</taxon>
        <taxon>Fungi</taxon>
        <taxon>Dikarya</taxon>
        <taxon>Ascomycota</taxon>
        <taxon>Taphrinomycotina</taxon>
        <taxon>Schizosaccharomycetes</taxon>
        <taxon>Schizosaccharomycetales</taxon>
        <taxon>Schizosaccharomycetaceae</taxon>
        <taxon>Schizosaccharomyces</taxon>
    </lineage>
</organism>
<sequence>MSSSSNSDPSSSPDNTDFIPLKDNPKDTSSYINKKNPFVNDSFDSHDDSYLDNVNPFEYNVADDEDTISMTSDGVEFHNLGITETVDEQDKILSELQLAYPTVSRYSETLDKGLLNGDKTTKGDYTSLRRFRKPFLFDKLSPYFTHFFSEIYAAVLRVVGPPRANETPGRNLPFSPILRQIYNHPLYNIFIFVVIVLHAVLLMIRSDDPHDKSQTIDYLIIVIGILYTLEMLLKIYLFGFLYDGSSSFYDFINSYTKKTPRTMSYLRHSWNRVDFVAIVALWISVIGKKQQGIFRLFSMIACLRLTRLLNITRKTETILKSLKESSTPLVQVVSFNAFFGVMIAILGVQFFKASLNRQCVWLGDYGDQYLPTGQFCGGHWENGIKRAYLDKNGFPSNVNPRGFICAEKSVCRVVENPYSNTVSFDNFFNSLELIFVIMSSNGFTDIMYDIMDAEYFVSCLLFIISAYFLTLWLMSLVIAVVTSSFIDLQHSGKNQKEQKSVDKHLIRNKLCEKYLFYSNFIWISFIVAQFVTLCTQTYDQTSSTANRYLIFYACVDFLLAAEVILRFFAYLPDYRLFFRRYTNLVDIVLAVLNLVTLLPSIRKNPVAFGWLSIFAIARIYRCILLIPYTRKIAKLLFSNFKQLLNLMLFLVIVLFIASLCAVRLFQDLPNDGDSDDDAISFATTYESFLYMYQILTSENWTDVMFAIQARLAHLHLSWIPGAFFTLWFLFSNNVVLSMFIAVIQVNFAPSESDLKMEQLKMYLARLLRNYNPFQASLTLNALIKRNGSRKGKTVDESHYEWLYEDNIIKGFLRVTNIPPKEPLKPSLDTSPELSKYSLAKLSNNFKRFVMRDDPFSQAYFKRVIGIRWEKDMNLKTAAKDMQAAKAFVRIKQTEFLKNHPKYNDVFWVIKPSNRIRRFCQRLVMPGVNERYGGVEPYQWVYRVIQVFIYACILTAVIIECIATPIYERDHLLNDKQHAWFVWTEVAFATIFTIEAAIKIIADGFCITPNAYLRSTWNCIDFFVLVTLWINLYAVLTSHALLSRAFRAFKALRVLRLINLTQTSQRMFHDALISGFFKIFSAAVVSATLLIPFALWAKNVFGGLLYSCNDDNVLSASQCVLEYASTPNNWEVWAPRVWSNPPDYDFDRFPHALLALFEIASIEGWVDIMRSVMDITGFNNQPQTNASSGNAMFFVLFNLVSMIYILTLFIAIIISNYAERTGSAFFTAEQRAWLELRRKIKSMRPSKRPAIRPLGLRGLCYDFAVQKHGIWRRTFTGLYIVHLLFLLTIFYPCPIAYTYVRNSIFLILSICYTINICVKVYGLSFYYFFHSFWNMFDVVVTLGSLTCNIAILAKFENRSLTLLQTTLLVLVTVHLIPKFDNFDQLSKTVVASLPSIFSLIATWIVLYITFAIAFNQIFGLTKLGLNGGPNKNFRSIRNALVLLFTMTFGEGWNDVMHDYTISYPNCVNGDDFYNSDCGNKPWAYGLFIAWNIISMYIFVNMFITVVFDNFSYIHTKSSSFTNLQRNDFRQFKDSWAPFDPMVTGYIPKRNAVKFVLSLRGVYDFRIYRDEHTLRSIISKVQSKTGQQSVPMLENPLMGSEINLEALDQIIDTIDVNVVKERRNVLNSLCTEIMTLPGNVISFSNILMLVVLHKIVDHREAFPISDYIRRAYVLSELEKSIRMEKLLGLVETSIIRKTFLQHMEEKKKALENPFILLSEVSEILPETPIQEVLRQHNADPEQLLMSTRTPSVSDRSFSIVESTVPTIASGEGDDNHSVEDHLKVPTDNEPRRSPSLKEVLLRGSHSLHSNNDRTSFDIEAGFGTAESDFQFGGATEDINRIADRIDDYLDRDSFKG</sequence>
<gene>
    <name type="primary">cch1</name>
    <name type="ORF">SPAC6F6.01</name>
</gene>
<accession>O14234</accession>
<feature type="chain" id="PRO_0000311769" description="Calcium-channel protein cch1">
    <location>
        <begin position="1"/>
        <end position="1854"/>
    </location>
</feature>
<feature type="transmembrane region" description="Helical" evidence="2">
    <location>
        <begin position="184"/>
        <end position="204"/>
    </location>
</feature>
<feature type="transmembrane region" description="Helical" evidence="2">
    <location>
        <begin position="220"/>
        <end position="240"/>
    </location>
</feature>
<feature type="transmembrane region" description="Helical" evidence="2">
    <location>
        <begin position="274"/>
        <end position="294"/>
    </location>
</feature>
<feature type="transmembrane region" description="Helical" evidence="2">
    <location>
        <begin position="328"/>
        <end position="348"/>
    </location>
</feature>
<feature type="transmembrane region" description="Helical" evidence="2">
    <location>
        <begin position="427"/>
        <end position="447"/>
    </location>
</feature>
<feature type="transmembrane region" description="Helical" evidence="2">
    <location>
        <begin position="461"/>
        <end position="481"/>
    </location>
</feature>
<feature type="transmembrane region" description="Helical" evidence="2">
    <location>
        <begin position="514"/>
        <end position="534"/>
    </location>
</feature>
<feature type="transmembrane region" description="Helical" evidence="2">
    <location>
        <begin position="549"/>
        <end position="569"/>
    </location>
</feature>
<feature type="transmembrane region" description="Helical" evidence="2">
    <location>
        <begin position="581"/>
        <end position="601"/>
    </location>
</feature>
<feature type="transmembrane region" description="Helical" evidence="2">
    <location>
        <begin position="606"/>
        <end position="626"/>
    </location>
</feature>
<feature type="transmembrane region" description="Helical" evidence="2">
    <location>
        <begin position="642"/>
        <end position="662"/>
    </location>
</feature>
<feature type="transmembrane region" description="Helical" evidence="2">
    <location>
        <begin position="723"/>
        <end position="743"/>
    </location>
</feature>
<feature type="transmembrane region" description="Helical" evidence="2">
    <location>
        <begin position="946"/>
        <end position="966"/>
    </location>
</feature>
<feature type="transmembrane region" description="Helical" evidence="2">
    <location>
        <begin position="980"/>
        <end position="1000"/>
    </location>
</feature>
<feature type="transmembrane region" description="Helical" evidence="2">
    <location>
        <begin position="1021"/>
        <end position="1041"/>
    </location>
</feature>
<feature type="transmembrane region" description="Helical" evidence="2">
    <location>
        <begin position="1075"/>
        <end position="1095"/>
    </location>
</feature>
<feature type="transmembrane region" description="Helical" evidence="2">
    <location>
        <begin position="1148"/>
        <end position="1168"/>
    </location>
</feature>
<feature type="transmembrane region" description="Helical" evidence="2">
    <location>
        <begin position="1193"/>
        <end position="1213"/>
    </location>
</feature>
<feature type="transmembrane region" description="Helical" evidence="2">
    <location>
        <begin position="1274"/>
        <end position="1294"/>
    </location>
</feature>
<feature type="transmembrane region" description="Helical" evidence="2">
    <location>
        <begin position="1302"/>
        <end position="1322"/>
    </location>
</feature>
<feature type="transmembrane region" description="Helical" evidence="2">
    <location>
        <begin position="1331"/>
        <end position="1351"/>
    </location>
</feature>
<feature type="transmembrane region" description="Helical" evidence="2">
    <location>
        <begin position="1358"/>
        <end position="1378"/>
    </location>
</feature>
<feature type="transmembrane region" description="Helical" evidence="2">
    <location>
        <begin position="1393"/>
        <end position="1413"/>
    </location>
</feature>
<feature type="transmembrane region" description="Helical" evidence="2">
    <location>
        <begin position="1486"/>
        <end position="1506"/>
    </location>
</feature>
<feature type="region of interest" description="Disordered" evidence="4">
    <location>
        <begin position="1"/>
        <end position="33"/>
    </location>
</feature>
<feature type="region of interest" description="Disordered" evidence="4">
    <location>
        <begin position="1764"/>
        <end position="1792"/>
    </location>
</feature>
<feature type="compositionally biased region" description="Low complexity" evidence="4">
    <location>
        <begin position="1"/>
        <end position="15"/>
    </location>
</feature>
<feature type="compositionally biased region" description="Basic and acidic residues" evidence="4">
    <location>
        <begin position="1771"/>
        <end position="1790"/>
    </location>
</feature>
<feature type="glycosylation site" description="N-linked (GlcNAc...) asparagine" evidence="3">
    <location>
        <position position="40"/>
    </location>
</feature>
<feature type="glycosylation site" description="N-linked (GlcNAc...) asparagine" evidence="3">
    <location>
        <position position="310"/>
    </location>
</feature>
<feature type="glycosylation site" description="N-linked (GlcNAc...) asparagine" evidence="3">
    <location>
        <position position="699"/>
    </location>
</feature>
<feature type="glycosylation site" description="N-linked (GlcNAc...) asparagine" evidence="3">
    <location>
        <position position="786"/>
    </location>
</feature>
<feature type="glycosylation site" description="N-linked (GlcNAc...) asparagine" evidence="3">
    <location>
        <position position="1058"/>
    </location>
</feature>
<feature type="glycosylation site" description="N-linked (GlcNAc...) asparagine" evidence="3">
    <location>
        <position position="1184"/>
    </location>
</feature>
<feature type="glycosylation site" description="N-linked (GlcNAc...) asparagine" evidence="3">
    <location>
        <position position="1356"/>
    </location>
</feature>
<feature type="glycosylation site" description="N-linked (GlcNAc...) asparagine" evidence="3">
    <location>
        <position position="1508"/>
    </location>
</feature>
<feature type="glycosylation site" description="N-linked (GlcNAc...) asparagine" evidence="3">
    <location>
        <position position="1773"/>
    </location>
</feature>
<protein>
    <recommendedName>
        <fullName>Calcium-channel protein cch1</fullName>
    </recommendedName>
</protein>
<keyword id="KW-0106">Calcium</keyword>
<keyword id="KW-0107">Calcium channel</keyword>
<keyword id="KW-0109">Calcium transport</keyword>
<keyword id="KW-1003">Cell membrane</keyword>
<keyword id="KW-0325">Glycoprotein</keyword>
<keyword id="KW-0407">Ion channel</keyword>
<keyword id="KW-0406">Ion transport</keyword>
<keyword id="KW-0472">Membrane</keyword>
<keyword id="KW-1185">Reference proteome</keyword>
<keyword id="KW-0812">Transmembrane</keyword>
<keyword id="KW-1133">Transmembrane helix</keyword>
<keyword id="KW-0813">Transport</keyword>
<keyword id="KW-0851">Voltage-gated channel</keyword>